<name>RUVC_PSEA8</name>
<protein>
    <recommendedName>
        <fullName evidence="1">Crossover junction endodeoxyribonuclease RuvC</fullName>
        <ecNumber evidence="1">3.1.21.10</ecNumber>
    </recommendedName>
    <alternativeName>
        <fullName evidence="1">Holliday junction nuclease RuvC</fullName>
    </alternativeName>
    <alternativeName>
        <fullName evidence="1">Holliday junction resolvase RuvC</fullName>
    </alternativeName>
</protein>
<feature type="chain" id="PRO_1000195267" description="Crossover junction endodeoxyribonuclease RuvC">
    <location>
        <begin position="1"/>
        <end position="174"/>
    </location>
</feature>
<feature type="active site" evidence="1">
    <location>
        <position position="8"/>
    </location>
</feature>
<feature type="active site" evidence="1">
    <location>
        <position position="67"/>
    </location>
</feature>
<feature type="active site" evidence="1">
    <location>
        <position position="139"/>
    </location>
</feature>
<feature type="binding site" evidence="1">
    <location>
        <position position="8"/>
    </location>
    <ligand>
        <name>Mg(2+)</name>
        <dbReference type="ChEBI" id="CHEBI:18420"/>
        <label>1</label>
    </ligand>
</feature>
<feature type="binding site" evidence="1">
    <location>
        <position position="67"/>
    </location>
    <ligand>
        <name>Mg(2+)</name>
        <dbReference type="ChEBI" id="CHEBI:18420"/>
        <label>2</label>
    </ligand>
</feature>
<feature type="binding site" evidence="1">
    <location>
        <position position="139"/>
    </location>
    <ligand>
        <name>Mg(2+)</name>
        <dbReference type="ChEBI" id="CHEBI:18420"/>
        <label>1</label>
    </ligand>
</feature>
<dbReference type="EC" id="3.1.21.10" evidence="1"/>
<dbReference type="EMBL" id="FM209186">
    <property type="protein sequence ID" value="CAW29104.1"/>
    <property type="molecule type" value="Genomic_DNA"/>
</dbReference>
<dbReference type="RefSeq" id="WP_003112575.1">
    <property type="nucleotide sequence ID" value="NC_011770.1"/>
</dbReference>
<dbReference type="SMR" id="B7UXW7"/>
<dbReference type="KEGG" id="pag:PLES_43491"/>
<dbReference type="HOGENOM" id="CLU_091257_2_1_6"/>
<dbReference type="GO" id="GO:0005737">
    <property type="term" value="C:cytoplasm"/>
    <property type="evidence" value="ECO:0007669"/>
    <property type="project" value="UniProtKB-SubCell"/>
</dbReference>
<dbReference type="GO" id="GO:0048476">
    <property type="term" value="C:Holliday junction resolvase complex"/>
    <property type="evidence" value="ECO:0007669"/>
    <property type="project" value="UniProtKB-UniRule"/>
</dbReference>
<dbReference type="GO" id="GO:0008821">
    <property type="term" value="F:crossover junction DNA endonuclease activity"/>
    <property type="evidence" value="ECO:0007669"/>
    <property type="project" value="UniProtKB-UniRule"/>
</dbReference>
<dbReference type="GO" id="GO:0003677">
    <property type="term" value="F:DNA binding"/>
    <property type="evidence" value="ECO:0007669"/>
    <property type="project" value="UniProtKB-KW"/>
</dbReference>
<dbReference type="GO" id="GO:0000287">
    <property type="term" value="F:magnesium ion binding"/>
    <property type="evidence" value="ECO:0007669"/>
    <property type="project" value="UniProtKB-UniRule"/>
</dbReference>
<dbReference type="GO" id="GO:0006310">
    <property type="term" value="P:DNA recombination"/>
    <property type="evidence" value="ECO:0007669"/>
    <property type="project" value="UniProtKB-UniRule"/>
</dbReference>
<dbReference type="GO" id="GO:0006281">
    <property type="term" value="P:DNA repair"/>
    <property type="evidence" value="ECO:0007669"/>
    <property type="project" value="UniProtKB-UniRule"/>
</dbReference>
<dbReference type="CDD" id="cd16962">
    <property type="entry name" value="RuvC"/>
    <property type="match status" value="1"/>
</dbReference>
<dbReference type="FunFam" id="3.30.420.10:FF:000002">
    <property type="entry name" value="Crossover junction endodeoxyribonuclease RuvC"/>
    <property type="match status" value="1"/>
</dbReference>
<dbReference type="Gene3D" id="3.30.420.10">
    <property type="entry name" value="Ribonuclease H-like superfamily/Ribonuclease H"/>
    <property type="match status" value="1"/>
</dbReference>
<dbReference type="HAMAP" id="MF_00034">
    <property type="entry name" value="RuvC"/>
    <property type="match status" value="1"/>
</dbReference>
<dbReference type="InterPro" id="IPR012337">
    <property type="entry name" value="RNaseH-like_sf"/>
</dbReference>
<dbReference type="InterPro" id="IPR036397">
    <property type="entry name" value="RNaseH_sf"/>
</dbReference>
<dbReference type="InterPro" id="IPR020563">
    <property type="entry name" value="X-over_junc_endoDNase_Mg_BS"/>
</dbReference>
<dbReference type="InterPro" id="IPR002176">
    <property type="entry name" value="X-over_junc_endoDNase_RuvC"/>
</dbReference>
<dbReference type="NCBIfam" id="TIGR00228">
    <property type="entry name" value="ruvC"/>
    <property type="match status" value="1"/>
</dbReference>
<dbReference type="PANTHER" id="PTHR30194">
    <property type="entry name" value="CROSSOVER JUNCTION ENDODEOXYRIBONUCLEASE RUVC"/>
    <property type="match status" value="1"/>
</dbReference>
<dbReference type="PANTHER" id="PTHR30194:SF3">
    <property type="entry name" value="CROSSOVER JUNCTION ENDODEOXYRIBONUCLEASE RUVC"/>
    <property type="match status" value="1"/>
</dbReference>
<dbReference type="Pfam" id="PF02075">
    <property type="entry name" value="RuvC"/>
    <property type="match status" value="1"/>
</dbReference>
<dbReference type="PRINTS" id="PR00696">
    <property type="entry name" value="RSOLVASERUVC"/>
</dbReference>
<dbReference type="SUPFAM" id="SSF53098">
    <property type="entry name" value="Ribonuclease H-like"/>
    <property type="match status" value="1"/>
</dbReference>
<dbReference type="PROSITE" id="PS01321">
    <property type="entry name" value="RUVC"/>
    <property type="match status" value="1"/>
</dbReference>
<comment type="function">
    <text evidence="1">The RuvA-RuvB-RuvC complex processes Holliday junction (HJ) DNA during genetic recombination and DNA repair. Endonuclease that resolves HJ intermediates. Cleaves cruciform DNA by making single-stranded nicks across the HJ at symmetrical positions within the homologous arms, yielding a 5'-phosphate and a 3'-hydroxyl group; requires a central core of homology in the junction. The consensus cleavage sequence is 5'-(A/T)TT(C/G)-3'. Cleavage occurs on the 3'-side of the TT dinucleotide at the point of strand exchange. HJ branch migration catalyzed by RuvA-RuvB allows RuvC to scan DNA until it finds its consensus sequence, where it cleaves and resolves the cruciform DNA.</text>
</comment>
<comment type="catalytic activity">
    <reaction evidence="1">
        <text>Endonucleolytic cleavage at a junction such as a reciprocal single-stranded crossover between two homologous DNA duplexes (Holliday junction).</text>
        <dbReference type="EC" id="3.1.21.10"/>
    </reaction>
</comment>
<comment type="cofactor">
    <cofactor evidence="1">
        <name>Mg(2+)</name>
        <dbReference type="ChEBI" id="CHEBI:18420"/>
    </cofactor>
    <text evidence="1">Binds 2 Mg(2+) ion per subunit.</text>
</comment>
<comment type="subunit">
    <text evidence="1">Homodimer which binds Holliday junction (HJ) DNA. The HJ becomes 2-fold symmetrical on binding to RuvC with unstacked arms; it has a different conformation from HJ DNA in complex with RuvA. In the full resolvosome a probable DNA-RuvA(4)-RuvB(12)-RuvC(2) complex forms which resolves the HJ.</text>
</comment>
<comment type="subcellular location">
    <subcellularLocation>
        <location evidence="1">Cytoplasm</location>
    </subcellularLocation>
</comment>
<comment type="similarity">
    <text evidence="1">Belongs to the RuvC family.</text>
</comment>
<gene>
    <name evidence="1" type="primary">ruvC</name>
    <name type="ordered locus">PLES_43491</name>
</gene>
<keyword id="KW-0963">Cytoplasm</keyword>
<keyword id="KW-0227">DNA damage</keyword>
<keyword id="KW-0233">DNA recombination</keyword>
<keyword id="KW-0234">DNA repair</keyword>
<keyword id="KW-0238">DNA-binding</keyword>
<keyword id="KW-0255">Endonuclease</keyword>
<keyword id="KW-0378">Hydrolase</keyword>
<keyword id="KW-0460">Magnesium</keyword>
<keyword id="KW-0479">Metal-binding</keyword>
<keyword id="KW-0540">Nuclease</keyword>
<reference key="1">
    <citation type="journal article" date="2009" name="Genome Res.">
        <title>Newly introduced genomic prophage islands are critical determinants of in vivo competitiveness in the Liverpool epidemic strain of Pseudomonas aeruginosa.</title>
        <authorList>
            <person name="Winstanley C."/>
            <person name="Langille M.G.I."/>
            <person name="Fothergill J.L."/>
            <person name="Kukavica-Ibrulj I."/>
            <person name="Paradis-Bleau C."/>
            <person name="Sanschagrin F."/>
            <person name="Thomson N.R."/>
            <person name="Winsor G.L."/>
            <person name="Quail M.A."/>
            <person name="Lennard N."/>
            <person name="Bignell A."/>
            <person name="Clarke L."/>
            <person name="Seeger K."/>
            <person name="Saunders D."/>
            <person name="Harris D."/>
            <person name="Parkhill J."/>
            <person name="Hancock R.E.W."/>
            <person name="Brinkman F.S.L."/>
            <person name="Levesque R.C."/>
        </authorList>
    </citation>
    <scope>NUCLEOTIDE SEQUENCE [LARGE SCALE GENOMIC DNA]</scope>
    <source>
        <strain>LESB58</strain>
    </source>
</reference>
<accession>B7UXW7</accession>
<proteinExistence type="inferred from homology"/>
<organism>
    <name type="scientific">Pseudomonas aeruginosa (strain LESB58)</name>
    <dbReference type="NCBI Taxonomy" id="557722"/>
    <lineage>
        <taxon>Bacteria</taxon>
        <taxon>Pseudomonadati</taxon>
        <taxon>Pseudomonadota</taxon>
        <taxon>Gammaproteobacteria</taxon>
        <taxon>Pseudomonadales</taxon>
        <taxon>Pseudomonadaceae</taxon>
        <taxon>Pseudomonas</taxon>
    </lineage>
</organism>
<evidence type="ECO:0000255" key="1">
    <source>
        <dbReference type="HAMAP-Rule" id="MF_00034"/>
    </source>
</evidence>
<sequence>MTLILGIDPGSRITGFGVVRETARGCEYVASGCIRTGNGPLHERLHVVFRSVREVIRTHGPTALSIEQVFMARNADSALKLGQARGAAIVAAMEEGLSVAEYTASQVKQAVVGTGGADKQQVQMMVMHLLKLTQKPQIDASDALAIALCHAHTQQSLVPHGLVGARRRGGRLRL</sequence>